<name>ARGB_FRAAA</name>
<feature type="chain" id="PRO_0000335633" description="Acetylglutamate kinase">
    <location>
        <begin position="1"/>
        <end position="343"/>
    </location>
</feature>
<feature type="binding site" evidence="1">
    <location>
        <begin position="98"/>
        <end position="99"/>
    </location>
    <ligand>
        <name>substrate</name>
    </ligand>
</feature>
<feature type="binding site" evidence="1">
    <location>
        <position position="120"/>
    </location>
    <ligand>
        <name>substrate</name>
    </ligand>
</feature>
<feature type="binding site" evidence="1">
    <location>
        <position position="219"/>
    </location>
    <ligand>
        <name>substrate</name>
    </ligand>
</feature>
<feature type="site" description="Transition state stabilizer" evidence="1">
    <location>
        <position position="63"/>
    </location>
</feature>
<feature type="site" description="Transition state stabilizer" evidence="1">
    <location>
        <position position="280"/>
    </location>
</feature>
<proteinExistence type="inferred from homology"/>
<sequence>MTDTAPTDITTATDITTATGAATGTGRGPAATARGHAALAKTQVLIEALPWLSRFQGATIVIKYGGNAMTEPALRAAFAADIVFLRYSGLRVVVVHGGGPQITAHLARLGVESTFVGGLRVTTPETMDVVRMVLLGQVNRDVVGLVNDHGPFAVGLSGEDANLFTARRRPAIVDGQEVDVGLVGDIVEVRAETVDALLDSGKVPVVASVARGIDGGVYNVNADTAAAELAVALGATKLVVLTDVEGLYADWPTSDEVLSELSITELEQLLPTLAAGMIPKMEACRRAVRGGVPQAHVLDGRVPHAVLLEIFTDDGIGTLITPDRDTANRVAPAAPTAYSGGRP</sequence>
<keyword id="KW-0028">Amino-acid biosynthesis</keyword>
<keyword id="KW-0055">Arginine biosynthesis</keyword>
<keyword id="KW-0067">ATP-binding</keyword>
<keyword id="KW-0963">Cytoplasm</keyword>
<keyword id="KW-0418">Kinase</keyword>
<keyword id="KW-0547">Nucleotide-binding</keyword>
<keyword id="KW-1185">Reference proteome</keyword>
<keyword id="KW-0808">Transferase</keyword>
<comment type="function">
    <text evidence="1">Catalyzes the ATP-dependent phosphorylation of N-acetyl-L-glutamate.</text>
</comment>
<comment type="catalytic activity">
    <reaction evidence="1">
        <text>N-acetyl-L-glutamate + ATP = N-acetyl-L-glutamyl 5-phosphate + ADP</text>
        <dbReference type="Rhea" id="RHEA:14629"/>
        <dbReference type="ChEBI" id="CHEBI:30616"/>
        <dbReference type="ChEBI" id="CHEBI:44337"/>
        <dbReference type="ChEBI" id="CHEBI:57936"/>
        <dbReference type="ChEBI" id="CHEBI:456216"/>
        <dbReference type="EC" id="2.7.2.8"/>
    </reaction>
</comment>
<comment type="pathway">
    <text evidence="1">Amino-acid biosynthesis; L-arginine biosynthesis; N(2)-acetyl-L-ornithine from L-glutamate: step 2/4.</text>
</comment>
<comment type="subcellular location">
    <subcellularLocation>
        <location evidence="1">Cytoplasm</location>
    </subcellularLocation>
</comment>
<comment type="similarity">
    <text evidence="1">Belongs to the acetylglutamate kinase family. ArgB subfamily.</text>
</comment>
<protein>
    <recommendedName>
        <fullName evidence="1">Acetylglutamate kinase</fullName>
        <ecNumber evidence="1">2.7.2.8</ecNumber>
    </recommendedName>
    <alternativeName>
        <fullName evidence="1">N-acetyl-L-glutamate 5-phosphotransferase</fullName>
    </alternativeName>
    <alternativeName>
        <fullName evidence="1">NAG kinase</fullName>
        <shortName evidence="1">NAGK</shortName>
    </alternativeName>
</protein>
<organism>
    <name type="scientific">Frankia alni (strain DSM 45986 / CECT 9034 / ACN14a)</name>
    <dbReference type="NCBI Taxonomy" id="326424"/>
    <lineage>
        <taxon>Bacteria</taxon>
        <taxon>Bacillati</taxon>
        <taxon>Actinomycetota</taxon>
        <taxon>Actinomycetes</taxon>
        <taxon>Frankiales</taxon>
        <taxon>Frankiaceae</taxon>
        <taxon>Frankia</taxon>
    </lineage>
</organism>
<evidence type="ECO:0000255" key="1">
    <source>
        <dbReference type="HAMAP-Rule" id="MF_00082"/>
    </source>
</evidence>
<reference key="1">
    <citation type="journal article" date="2007" name="Genome Res.">
        <title>Genome characteristics of facultatively symbiotic Frankia sp. strains reflect host range and host plant biogeography.</title>
        <authorList>
            <person name="Normand P."/>
            <person name="Lapierre P."/>
            <person name="Tisa L.S."/>
            <person name="Gogarten J.P."/>
            <person name="Alloisio N."/>
            <person name="Bagnarol E."/>
            <person name="Bassi C.A."/>
            <person name="Berry A.M."/>
            <person name="Bickhart D.M."/>
            <person name="Choisne N."/>
            <person name="Couloux A."/>
            <person name="Cournoyer B."/>
            <person name="Cruveiller S."/>
            <person name="Daubin V."/>
            <person name="Demange N."/>
            <person name="Francino M.P."/>
            <person name="Goltsman E."/>
            <person name="Huang Y."/>
            <person name="Kopp O.R."/>
            <person name="Labarre L."/>
            <person name="Lapidus A."/>
            <person name="Lavire C."/>
            <person name="Marechal J."/>
            <person name="Martinez M."/>
            <person name="Mastronunzio J.E."/>
            <person name="Mullin B.C."/>
            <person name="Niemann J."/>
            <person name="Pujic P."/>
            <person name="Rawnsley T."/>
            <person name="Rouy Z."/>
            <person name="Schenowitz C."/>
            <person name="Sellstedt A."/>
            <person name="Tavares F."/>
            <person name="Tomkins J.P."/>
            <person name="Vallenet D."/>
            <person name="Valverde C."/>
            <person name="Wall L.G."/>
            <person name="Wang Y."/>
            <person name="Medigue C."/>
            <person name="Benson D.R."/>
        </authorList>
    </citation>
    <scope>NUCLEOTIDE SEQUENCE [LARGE SCALE GENOMIC DNA]</scope>
    <source>
        <strain>DSM 45986 / CECT 9034 / ACN14a</strain>
    </source>
</reference>
<gene>
    <name evidence="1" type="primary">argB</name>
    <name type="ordered locus">FRAAL5206</name>
</gene>
<accession>Q0RFA8</accession>
<dbReference type="EC" id="2.7.2.8" evidence="1"/>
<dbReference type="EMBL" id="CT573213">
    <property type="protein sequence ID" value="CAJ63839.1"/>
    <property type="molecule type" value="Genomic_DNA"/>
</dbReference>
<dbReference type="RefSeq" id="WP_011606300.1">
    <property type="nucleotide sequence ID" value="NC_008278.1"/>
</dbReference>
<dbReference type="SMR" id="Q0RFA8"/>
<dbReference type="STRING" id="326424.FRAAL5206"/>
<dbReference type="KEGG" id="fal:FRAAL5206"/>
<dbReference type="eggNOG" id="COG0548">
    <property type="taxonomic scope" value="Bacteria"/>
</dbReference>
<dbReference type="HOGENOM" id="CLU_053680_0_0_11"/>
<dbReference type="UniPathway" id="UPA00068">
    <property type="reaction ID" value="UER00107"/>
</dbReference>
<dbReference type="Proteomes" id="UP000000657">
    <property type="component" value="Chromosome"/>
</dbReference>
<dbReference type="GO" id="GO:0005737">
    <property type="term" value="C:cytoplasm"/>
    <property type="evidence" value="ECO:0007669"/>
    <property type="project" value="UniProtKB-SubCell"/>
</dbReference>
<dbReference type="GO" id="GO:0003991">
    <property type="term" value="F:acetylglutamate kinase activity"/>
    <property type="evidence" value="ECO:0007669"/>
    <property type="project" value="UniProtKB-UniRule"/>
</dbReference>
<dbReference type="GO" id="GO:0005524">
    <property type="term" value="F:ATP binding"/>
    <property type="evidence" value="ECO:0007669"/>
    <property type="project" value="UniProtKB-UniRule"/>
</dbReference>
<dbReference type="GO" id="GO:0042450">
    <property type="term" value="P:arginine biosynthetic process via ornithine"/>
    <property type="evidence" value="ECO:0007669"/>
    <property type="project" value="UniProtKB-UniRule"/>
</dbReference>
<dbReference type="GO" id="GO:0006526">
    <property type="term" value="P:L-arginine biosynthetic process"/>
    <property type="evidence" value="ECO:0007669"/>
    <property type="project" value="UniProtKB-UniPathway"/>
</dbReference>
<dbReference type="CDD" id="cd04250">
    <property type="entry name" value="AAK_NAGK-C"/>
    <property type="match status" value="1"/>
</dbReference>
<dbReference type="FunFam" id="3.40.1160.10:FF:000004">
    <property type="entry name" value="Acetylglutamate kinase"/>
    <property type="match status" value="1"/>
</dbReference>
<dbReference type="Gene3D" id="3.40.1160.10">
    <property type="entry name" value="Acetylglutamate kinase-like"/>
    <property type="match status" value="1"/>
</dbReference>
<dbReference type="HAMAP" id="MF_00082">
    <property type="entry name" value="ArgB"/>
    <property type="match status" value="1"/>
</dbReference>
<dbReference type="InterPro" id="IPR036393">
    <property type="entry name" value="AceGlu_kinase-like_sf"/>
</dbReference>
<dbReference type="InterPro" id="IPR004662">
    <property type="entry name" value="AcgluKinase_fam"/>
</dbReference>
<dbReference type="InterPro" id="IPR037528">
    <property type="entry name" value="ArgB"/>
</dbReference>
<dbReference type="InterPro" id="IPR001048">
    <property type="entry name" value="Asp/Glu/Uridylate_kinase"/>
</dbReference>
<dbReference type="InterPro" id="IPR001057">
    <property type="entry name" value="Glu/AcGlu_kinase"/>
</dbReference>
<dbReference type="InterPro" id="IPR041727">
    <property type="entry name" value="NAGK-C"/>
</dbReference>
<dbReference type="NCBIfam" id="TIGR00761">
    <property type="entry name" value="argB"/>
    <property type="match status" value="1"/>
</dbReference>
<dbReference type="PANTHER" id="PTHR23342">
    <property type="entry name" value="N-ACETYLGLUTAMATE SYNTHASE"/>
    <property type="match status" value="1"/>
</dbReference>
<dbReference type="PANTHER" id="PTHR23342:SF0">
    <property type="entry name" value="N-ACETYLGLUTAMATE SYNTHASE, MITOCHONDRIAL"/>
    <property type="match status" value="1"/>
</dbReference>
<dbReference type="Pfam" id="PF00696">
    <property type="entry name" value="AA_kinase"/>
    <property type="match status" value="1"/>
</dbReference>
<dbReference type="PIRSF" id="PIRSF000728">
    <property type="entry name" value="NAGK"/>
    <property type="match status" value="1"/>
</dbReference>
<dbReference type="PRINTS" id="PR00474">
    <property type="entry name" value="GLU5KINASE"/>
</dbReference>
<dbReference type="SUPFAM" id="SSF53633">
    <property type="entry name" value="Carbamate kinase-like"/>
    <property type="match status" value="1"/>
</dbReference>